<dbReference type="EC" id="4.1.3.40" evidence="1"/>
<dbReference type="EMBL" id="CP000094">
    <property type="protein sequence ID" value="ABA72454.1"/>
    <property type="molecule type" value="Genomic_DNA"/>
</dbReference>
<dbReference type="RefSeq" id="WP_011332348.1">
    <property type="nucleotide sequence ID" value="NC_007492.2"/>
</dbReference>
<dbReference type="SMR" id="Q3KIF2"/>
<dbReference type="KEGG" id="pfo:Pfl01_0710"/>
<dbReference type="eggNOG" id="COG3161">
    <property type="taxonomic scope" value="Bacteria"/>
</dbReference>
<dbReference type="HOGENOM" id="CLU_096824_0_0_6"/>
<dbReference type="UniPathway" id="UPA00232"/>
<dbReference type="Proteomes" id="UP000002704">
    <property type="component" value="Chromosome"/>
</dbReference>
<dbReference type="GO" id="GO:0005829">
    <property type="term" value="C:cytosol"/>
    <property type="evidence" value="ECO:0007669"/>
    <property type="project" value="TreeGrafter"/>
</dbReference>
<dbReference type="GO" id="GO:0008813">
    <property type="term" value="F:chorismate lyase activity"/>
    <property type="evidence" value="ECO:0007669"/>
    <property type="project" value="UniProtKB-UniRule"/>
</dbReference>
<dbReference type="GO" id="GO:0042866">
    <property type="term" value="P:pyruvate biosynthetic process"/>
    <property type="evidence" value="ECO:0007669"/>
    <property type="project" value="UniProtKB-UniRule"/>
</dbReference>
<dbReference type="GO" id="GO:0006744">
    <property type="term" value="P:ubiquinone biosynthetic process"/>
    <property type="evidence" value="ECO:0007669"/>
    <property type="project" value="UniProtKB-UniRule"/>
</dbReference>
<dbReference type="Gene3D" id="3.40.1410.10">
    <property type="entry name" value="Chorismate lyase-like"/>
    <property type="match status" value="1"/>
</dbReference>
<dbReference type="HAMAP" id="MF_01632">
    <property type="entry name" value="UbiC"/>
    <property type="match status" value="1"/>
</dbReference>
<dbReference type="InterPro" id="IPR007440">
    <property type="entry name" value="Chorismate--pyruvate_lyase"/>
</dbReference>
<dbReference type="InterPro" id="IPR028978">
    <property type="entry name" value="Chorismate_lyase_/UTRA_dom_sf"/>
</dbReference>
<dbReference type="PANTHER" id="PTHR38683">
    <property type="entry name" value="CHORISMATE PYRUVATE-LYASE"/>
    <property type="match status" value="1"/>
</dbReference>
<dbReference type="PANTHER" id="PTHR38683:SF1">
    <property type="entry name" value="CHORISMATE PYRUVATE-LYASE"/>
    <property type="match status" value="1"/>
</dbReference>
<dbReference type="Pfam" id="PF04345">
    <property type="entry name" value="Chor_lyase"/>
    <property type="match status" value="1"/>
</dbReference>
<dbReference type="SUPFAM" id="SSF64288">
    <property type="entry name" value="Chorismate lyase-like"/>
    <property type="match status" value="1"/>
</dbReference>
<feature type="chain" id="PRO_0000240557" description="Probable chorismate pyruvate-lyase 1">
    <location>
        <begin position="1"/>
        <end position="185"/>
    </location>
</feature>
<feature type="binding site" evidence="1">
    <location>
        <position position="70"/>
    </location>
    <ligand>
        <name>substrate</name>
    </ligand>
</feature>
<feature type="binding site" evidence="1">
    <location>
        <position position="108"/>
    </location>
    <ligand>
        <name>substrate</name>
    </ligand>
</feature>
<feature type="binding site" evidence="1">
    <location>
        <position position="166"/>
    </location>
    <ligand>
        <name>substrate</name>
    </ligand>
</feature>
<name>UBIC1_PSEPF</name>
<sequence length="185" mass="20500">MDTSHYWSSRPLSELTGSEHHWLFLPGALTPRLKAMGDYSIEVVEQSHGPLNPEEAQALNVSPNTIGWVREVVMKLDGEACVTARSLTSVPALNGDWADLNGYGRRPLAEILYTSEQTLREPFQCALLPPGAPLAALSYRYAPQAERLLARRSRFTRNGSALLVSECFLPAFWARVEYAQALKSA</sequence>
<gene>
    <name evidence="1" type="primary">ubiC1</name>
    <name type="ordered locus">Pfl01_0710</name>
</gene>
<accession>Q3KIF2</accession>
<keyword id="KW-0963">Cytoplasm</keyword>
<keyword id="KW-0456">Lyase</keyword>
<keyword id="KW-0670">Pyruvate</keyword>
<keyword id="KW-0831">Ubiquinone biosynthesis</keyword>
<reference key="1">
    <citation type="journal article" date="2009" name="Genome Biol.">
        <title>Genomic and genetic analyses of diversity and plant interactions of Pseudomonas fluorescens.</title>
        <authorList>
            <person name="Silby M.W."/>
            <person name="Cerdeno-Tarraga A.M."/>
            <person name="Vernikos G.S."/>
            <person name="Giddens S.R."/>
            <person name="Jackson R.W."/>
            <person name="Preston G.M."/>
            <person name="Zhang X.-X."/>
            <person name="Moon C.D."/>
            <person name="Gehrig S.M."/>
            <person name="Godfrey S.A.C."/>
            <person name="Knight C.G."/>
            <person name="Malone J.G."/>
            <person name="Robinson Z."/>
            <person name="Spiers A.J."/>
            <person name="Harris S."/>
            <person name="Challis G.L."/>
            <person name="Yaxley A.M."/>
            <person name="Harris D."/>
            <person name="Seeger K."/>
            <person name="Murphy L."/>
            <person name="Rutter S."/>
            <person name="Squares R."/>
            <person name="Quail M.A."/>
            <person name="Saunders E."/>
            <person name="Mavromatis K."/>
            <person name="Brettin T.S."/>
            <person name="Bentley S.D."/>
            <person name="Hothersall J."/>
            <person name="Stephens E."/>
            <person name="Thomas C.M."/>
            <person name="Parkhill J."/>
            <person name="Levy S.B."/>
            <person name="Rainey P.B."/>
            <person name="Thomson N.R."/>
        </authorList>
    </citation>
    <scope>NUCLEOTIDE SEQUENCE [LARGE SCALE GENOMIC DNA]</scope>
    <source>
        <strain>Pf0-1</strain>
    </source>
</reference>
<organism>
    <name type="scientific">Pseudomonas fluorescens (strain Pf0-1)</name>
    <dbReference type="NCBI Taxonomy" id="205922"/>
    <lineage>
        <taxon>Bacteria</taxon>
        <taxon>Pseudomonadati</taxon>
        <taxon>Pseudomonadota</taxon>
        <taxon>Gammaproteobacteria</taxon>
        <taxon>Pseudomonadales</taxon>
        <taxon>Pseudomonadaceae</taxon>
        <taxon>Pseudomonas</taxon>
    </lineage>
</organism>
<comment type="function">
    <text evidence="1">Removes the pyruvyl group from chorismate, with concomitant aromatization of the ring, to provide 4-hydroxybenzoate (4HB) for the ubiquinone pathway.</text>
</comment>
<comment type="catalytic activity">
    <reaction evidence="1">
        <text>chorismate = 4-hydroxybenzoate + pyruvate</text>
        <dbReference type="Rhea" id="RHEA:16505"/>
        <dbReference type="ChEBI" id="CHEBI:15361"/>
        <dbReference type="ChEBI" id="CHEBI:17879"/>
        <dbReference type="ChEBI" id="CHEBI:29748"/>
        <dbReference type="EC" id="4.1.3.40"/>
    </reaction>
</comment>
<comment type="pathway">
    <text evidence="1">Cofactor biosynthesis; ubiquinone biosynthesis.</text>
</comment>
<comment type="subcellular location">
    <subcellularLocation>
        <location evidence="1">Cytoplasm</location>
    </subcellularLocation>
</comment>
<comment type="similarity">
    <text evidence="1">Belongs to the UbiC family.</text>
</comment>
<protein>
    <recommendedName>
        <fullName evidence="1">Probable chorismate pyruvate-lyase 1</fullName>
        <shortName evidence="1">CL 1</shortName>
        <shortName evidence="1">CPL 1</shortName>
        <ecNumber evidence="1">4.1.3.40</ecNumber>
    </recommendedName>
</protein>
<proteinExistence type="inferred from homology"/>
<evidence type="ECO:0000255" key="1">
    <source>
        <dbReference type="HAMAP-Rule" id="MF_01632"/>
    </source>
</evidence>